<dbReference type="EMBL" id="AF179282">
    <property type="protein sequence ID" value="AAF62870.1"/>
    <property type="molecule type" value="mRNA"/>
</dbReference>
<dbReference type="SMR" id="Q9MUK5"/>
<dbReference type="IntAct" id="Q9MUK5">
    <property type="interactions" value="14"/>
</dbReference>
<dbReference type="MINT" id="Q9MUK5"/>
<dbReference type="TCDB" id="3.A.9.1.1">
    <property type="family name" value="the chloroplast envelope protein translocase (cept or tic-toc) family"/>
</dbReference>
<dbReference type="EnsemblPlants" id="Psat4g001480.1">
    <property type="protein sequence ID" value="Psat4g001480.1.cds"/>
    <property type="gene ID" value="Psat4g001480"/>
</dbReference>
<dbReference type="Gramene" id="Psat4g001480.1">
    <property type="protein sequence ID" value="Psat4g001480.1.cds"/>
    <property type="gene ID" value="Psat4g001480"/>
</dbReference>
<dbReference type="OrthoDB" id="245563at2759"/>
<dbReference type="GO" id="GO:0009707">
    <property type="term" value="C:chloroplast outer membrane"/>
    <property type="evidence" value="ECO:0007669"/>
    <property type="project" value="UniProtKB-SubCell"/>
</dbReference>
<dbReference type="GO" id="GO:0015031">
    <property type="term" value="P:protein transport"/>
    <property type="evidence" value="ECO:0007669"/>
    <property type="project" value="UniProtKB-KW"/>
</dbReference>
<dbReference type="FunFam" id="3.90.1300.10:FF:000004">
    <property type="entry name" value="Outer envelope protein 64, mitochondrial"/>
    <property type="match status" value="1"/>
</dbReference>
<dbReference type="Gene3D" id="3.90.1300.10">
    <property type="entry name" value="Amidase signature (AS) domain"/>
    <property type="match status" value="1"/>
</dbReference>
<dbReference type="Gene3D" id="1.25.40.10">
    <property type="entry name" value="Tetratricopeptide repeat domain"/>
    <property type="match status" value="1"/>
</dbReference>
<dbReference type="InterPro" id="IPR023631">
    <property type="entry name" value="Amidase_dom"/>
</dbReference>
<dbReference type="InterPro" id="IPR036928">
    <property type="entry name" value="AS_sf"/>
</dbReference>
<dbReference type="InterPro" id="IPR011990">
    <property type="entry name" value="TPR-like_helical_dom_sf"/>
</dbReference>
<dbReference type="InterPro" id="IPR013105">
    <property type="entry name" value="TPR_2"/>
</dbReference>
<dbReference type="InterPro" id="IPR019734">
    <property type="entry name" value="TPR_rpt"/>
</dbReference>
<dbReference type="PANTHER" id="PTHR46310">
    <property type="entry name" value="AMIDASE 1"/>
    <property type="match status" value="1"/>
</dbReference>
<dbReference type="PANTHER" id="PTHR46310:SF5">
    <property type="entry name" value="OUTER ENVELOPE PROTEIN 64, CHLOROPLASTIC"/>
    <property type="match status" value="1"/>
</dbReference>
<dbReference type="Pfam" id="PF01425">
    <property type="entry name" value="Amidase"/>
    <property type="match status" value="1"/>
</dbReference>
<dbReference type="Pfam" id="PF07719">
    <property type="entry name" value="TPR_2"/>
    <property type="match status" value="1"/>
</dbReference>
<dbReference type="Pfam" id="PF13181">
    <property type="entry name" value="TPR_8"/>
    <property type="match status" value="1"/>
</dbReference>
<dbReference type="SMART" id="SM00028">
    <property type="entry name" value="TPR"/>
    <property type="match status" value="3"/>
</dbReference>
<dbReference type="SUPFAM" id="SSF75304">
    <property type="entry name" value="Amidase signature (AS) enzymes"/>
    <property type="match status" value="1"/>
</dbReference>
<dbReference type="SUPFAM" id="SSF48452">
    <property type="entry name" value="TPR-like"/>
    <property type="match status" value="1"/>
</dbReference>
<dbReference type="PROSITE" id="PS50005">
    <property type="entry name" value="TPR"/>
    <property type="match status" value="3"/>
</dbReference>
<dbReference type="PROSITE" id="PS50293">
    <property type="entry name" value="TPR_REGION"/>
    <property type="match status" value="1"/>
</dbReference>
<organism>
    <name type="scientific">Pisum sativum</name>
    <name type="common">Garden pea</name>
    <name type="synonym">Lathyrus oleraceus</name>
    <dbReference type="NCBI Taxonomy" id="3888"/>
    <lineage>
        <taxon>Eukaryota</taxon>
        <taxon>Viridiplantae</taxon>
        <taxon>Streptophyta</taxon>
        <taxon>Embryophyta</taxon>
        <taxon>Tracheophyta</taxon>
        <taxon>Spermatophyta</taxon>
        <taxon>Magnoliopsida</taxon>
        <taxon>eudicotyledons</taxon>
        <taxon>Gunneridae</taxon>
        <taxon>Pentapetalae</taxon>
        <taxon>rosids</taxon>
        <taxon>fabids</taxon>
        <taxon>Fabales</taxon>
        <taxon>Fabaceae</taxon>
        <taxon>Papilionoideae</taxon>
        <taxon>50 kb inversion clade</taxon>
        <taxon>NPAAA clade</taxon>
        <taxon>Hologalegina</taxon>
        <taxon>IRL clade</taxon>
        <taxon>Fabeae</taxon>
        <taxon>Pisum</taxon>
    </lineage>
</organism>
<comment type="function">
    <text evidence="2 4 5">Chaperone receptor mediating Hsp90-dependent protein targeting to chloroplasts. Bi-functional preprotein receptor acting on both sides of the membrane.</text>
</comment>
<comment type="subunit">
    <text evidence="2 3 4 5">Part of the Toc complex and of the intermembrane space complex. Interacts with TOC12, TIC22 and with the cytosolic domain of TOC34 in a GTP dependent manner. Interacts (via TPR region) with HSP90 and with HSP70 with low efficiency.</text>
</comment>
<comment type="interaction">
    <interactant intactId="EBI-638487">
        <id>Q9MUK5</id>
    </interactant>
    <interactant intactId="EBI-638506">
        <id>Q41009</id>
        <label>TOC34</label>
    </interactant>
    <organismsDiffer>false</organismsDiffer>
    <experiments>6</experiments>
</comment>
<comment type="interaction">
    <interactant intactId="EBI-638487">
        <id>Q9MUK5</id>
    </interactant>
    <interactant intactId="EBI-638469">
        <id>Q43715</id>
        <label>TOC75</label>
    </interactant>
    <organismsDiffer>false</organismsDiffer>
    <experiments>2</experiments>
</comment>
<comment type="interaction">
    <interactant intactId="EBI-638487">
        <id>Q9MUK5</id>
    </interactant>
    <interactant intactId="EBI-638531">
        <id>Q9LKR1</id>
    </interactant>
    <organismsDiffer>false</organismsDiffer>
    <experiments>4</experiments>
</comment>
<comment type="subcellular location">
    <subcellularLocation>
        <location evidence="6">Plastid</location>
        <location evidence="6">Chloroplast outer membrane</location>
        <topology evidence="6">Multi-pass membrane protein</topology>
    </subcellularLocation>
</comment>
<comment type="domain">
    <text>The TPR region (477-578) is not required for assembly into the Toc complex, but interacts with TOC34 only while transferring the preprotein from HSP90 to the Toc core translocon.</text>
</comment>
<comment type="domain">
    <text>The amidase region (166-200) is required for the efficient transfer of the preprotein.</text>
</comment>
<name>TOC64_PEA</name>
<protein>
    <recommendedName>
        <fullName>Translocon at the outer membrane of chloroplasts 64</fullName>
    </recommendedName>
</protein>
<keyword id="KW-0150">Chloroplast</keyword>
<keyword id="KW-0903">Direct protein sequencing</keyword>
<keyword id="KW-0472">Membrane</keyword>
<keyword id="KW-0934">Plastid</keyword>
<keyword id="KW-1002">Plastid outer membrane</keyword>
<keyword id="KW-0653">Protein transport</keyword>
<keyword id="KW-0677">Repeat</keyword>
<keyword id="KW-0802">TPR repeat</keyword>
<keyword id="KW-0812">Transmembrane</keyword>
<keyword id="KW-1133">Transmembrane helix</keyword>
<keyword id="KW-0813">Transport</keyword>
<gene>
    <name type="primary">TOC64</name>
</gene>
<feature type="chain" id="PRO_0000414023" description="Translocon at the outer membrane of chloroplasts 64">
    <location>
        <begin position="1"/>
        <end position="593"/>
    </location>
</feature>
<feature type="topological domain" description="Chloroplast intermembrane">
    <location>
        <begin position="1"/>
        <end position="4"/>
    </location>
</feature>
<feature type="transmembrane region" description="Helical" evidence="1">
    <location>
        <begin position="5"/>
        <end position="25"/>
    </location>
</feature>
<feature type="topological domain" description="Cytoplasmic">
    <location>
        <begin position="26"/>
        <end position="144"/>
    </location>
</feature>
<feature type="transmembrane region" description="Helical" evidence="1">
    <location>
        <begin position="145"/>
        <end position="165"/>
    </location>
</feature>
<feature type="topological domain" description="Chloroplast intermembrane">
    <location>
        <begin position="166"/>
        <end position="403"/>
    </location>
</feature>
<feature type="transmembrane region" description="Helical" evidence="1">
    <location>
        <begin position="404"/>
        <end position="424"/>
    </location>
</feature>
<feature type="topological domain" description="Cytoplasmic">
    <location>
        <begin position="425"/>
        <end position="593"/>
    </location>
</feature>
<feature type="repeat" description="TPR 1">
    <location>
        <begin position="477"/>
        <end position="510"/>
    </location>
</feature>
<feature type="repeat" description="TPR 2">
    <location>
        <begin position="511"/>
        <end position="544"/>
    </location>
</feature>
<feature type="repeat" description="TPR 3">
    <location>
        <begin position="545"/>
        <end position="578"/>
    </location>
</feature>
<feature type="mutagenesis site" description="Loss of HSP90 binding, but no effect on HSP70 binding." evidence="4">
    <original>N</original>
    <variation>A</variation>
    <location>
        <position position="516"/>
    </location>
</feature>
<feature type="mutagenesis site" description="80% decrease of HSP70 and HSP90 binding." evidence="4">
    <original>R</original>
    <variation>A</variation>
    <location>
        <position position="550"/>
    </location>
</feature>
<accession>Q9MUK5</accession>
<sequence>MKSMASPSSQIWVILGLGLAGIYVLTRKLTQAVKEDFGAFLLKLKLLPPPPPAPPKAPHPLSSLNFAISDIFDIEGHVSTFGHPEWARTHEPASSTASAVSALVESGATCIGTTVVDELAYGISGENKHFGTPTNPAVPNRVPGGSSSGAAVAVAANFVDFSLGVDTSGGVRVPAGFCGILGFRPSHGAVSHVGIIPVSTSLDTVGWFAKDPDVLRRVGHILLQAPFVMQRNPRQIIIADDCFQHLNVPLDRTSQVVIKATEKLFGKQVLKHINFEDYISSKVSSLKACSIQKSNGVLKSSSLKLLANVMQSLQRHEFEHTHSEWMSIVKPDLHPAVSAQLHEKFEVSELEIENSKSVRSELRVAVNSLLKDEGVLVIPTVADPPPKLGGKEFLSHDYQSRALSLLSIASISGCCQVTVPLGFFDKNPVSVSLIARHGGDRFLLDTLKTMYTVLQEQADIAAPSKSSKSVVSKEQSAEISKEKGNQAYKDKQWQKAIGFYTEAIKLCGNNATYYSNRAQAYLELGSYLQAEEDCTTAISFDKKNVKAYFRRGTAREMLGYYKEAIDDFKYALVLEPTNKRAASSAERLRKLFQ</sequence>
<evidence type="ECO:0000255" key="1"/>
<evidence type="ECO:0000269" key="2">
    <source>
    </source>
</evidence>
<evidence type="ECO:0000269" key="3">
    <source>
    </source>
</evidence>
<evidence type="ECO:0000269" key="4">
    <source>
    </source>
</evidence>
<evidence type="ECO:0000269" key="5">
    <source>
    </source>
</evidence>
<evidence type="ECO:0000305" key="6"/>
<reference key="1">
    <citation type="journal article" date="2000" name="J. Cell Biol.">
        <title>Toc64, a new component of the protein translocon of chloroplasts.</title>
        <authorList>
            <person name="Sohrt K."/>
            <person name="Soll J."/>
        </authorList>
    </citation>
    <scope>NUCLEOTIDE SEQUENCE [MRNA]</scope>
    <scope>PROTEIN SEQUENCE OF 1-30; 118-140; 273-282; 327-332; 345-354; 451-456; 474-481; 564-567 AND 580-590</scope>
    <scope>FUNCTION</scope>
    <scope>INTERACTION WITH TOC COMPLEX</scope>
    <scope>SUBCELLULAR LOCATION</scope>
    <scope>TOPOLOGY</scope>
</reference>
<reference key="2">
    <citation type="journal article" date="2004" name="Mol. Biol. Cell">
        <title>Toc12, a novel subunit of the intermembrane space preprotein translocon of chloroplasts.</title>
        <authorList>
            <person name="Becker T."/>
            <person name="Hritz J."/>
            <person name="Vogel M."/>
            <person name="Caliebe A."/>
            <person name="Bukau B."/>
            <person name="Soll J."/>
            <person name="Schleiff E."/>
        </authorList>
    </citation>
    <scope>INTERACTION WITH TOC12</scope>
</reference>
<reference key="3">
    <citation type="journal article" date="2006" name="EMBO J.">
        <title>The molecular chaperone Hsp90 delivers precursor proteins to the chloroplast import receptor Toc64.</title>
        <authorList>
            <person name="Qbadou S."/>
            <person name="Becker T."/>
            <person name="Mirus O."/>
            <person name="Tews I."/>
            <person name="Soll J."/>
            <person name="Schleiff E."/>
        </authorList>
    </citation>
    <scope>FUNCTION</scope>
    <scope>MUTAGENESIS OF ASN-516 AND ARG-550</scope>
    <scope>INTERACTION WITH HSP90; HSP70 AND TOC34</scope>
</reference>
<reference key="4">
    <citation type="journal article" date="2007" name="J. Mol. Biol.">
        <title>Toc64--a preprotein-receptor at the outer membrane with bipartide function.</title>
        <authorList>
            <person name="Qbadou S."/>
            <person name="Becker T."/>
            <person name="Bionda T."/>
            <person name="Reger K."/>
            <person name="Ruprecht M."/>
            <person name="Soll J."/>
            <person name="Schleiff E."/>
        </authorList>
    </citation>
    <scope>FUNCTION</scope>
    <scope>TOPOLOGY</scope>
    <scope>INTERACTION WITH TIC22</scope>
</reference>
<reference key="5">
    <citation type="journal article" date="2009" name="J. Mol. Model.">
        <title>Evolutionarily evolved discriminators in the 3-TPR domain of the Toc64 family involved in protein translocation at the outer membrane of chloroplasts and mitochondria.</title>
        <authorList>
            <person name="Mirus O."/>
            <person name="Bionda T."/>
            <person name="von Haeseler A."/>
            <person name="Schleiff E."/>
        </authorList>
    </citation>
    <scope>3D-STRUCTURE MODELING</scope>
</reference>
<proteinExistence type="evidence at protein level"/>